<keyword id="KW-0150">Chloroplast</keyword>
<keyword id="KW-0934">Plastid</keyword>
<keyword id="KW-0687">Ribonucleoprotein</keyword>
<keyword id="KW-0689">Ribosomal protein</keyword>
<keyword id="KW-0694">RNA-binding</keyword>
<keyword id="KW-0699">rRNA-binding</keyword>
<organism>
    <name type="scientific">Schizorhiza neglecta</name>
    <name type="common">Lapeirousia neglecta</name>
    <dbReference type="NCBI Taxonomy" id="58958"/>
    <lineage>
        <taxon>Eukaryota</taxon>
        <taxon>Viridiplantae</taxon>
        <taxon>Streptophyta</taxon>
        <taxon>Embryophyta</taxon>
        <taxon>Tracheophyta</taxon>
        <taxon>Spermatophyta</taxon>
        <taxon>Magnoliopsida</taxon>
        <taxon>Liliopsida</taxon>
        <taxon>Asparagales</taxon>
        <taxon>Iridaceae</taxon>
        <taxon>Crocoideae</taxon>
        <taxon>Watsonieae</taxon>
        <taxon>Schizorhiza</taxon>
    </lineage>
</organism>
<dbReference type="EMBL" id="Z68244">
    <property type="protein sequence ID" value="CAA92542.1"/>
    <property type="molecule type" value="Genomic_DNA"/>
</dbReference>
<dbReference type="SMR" id="O20255"/>
<dbReference type="GO" id="GO:0009507">
    <property type="term" value="C:chloroplast"/>
    <property type="evidence" value="ECO:0007669"/>
    <property type="project" value="UniProtKB-SubCell"/>
</dbReference>
<dbReference type="GO" id="GO:0015935">
    <property type="term" value="C:small ribosomal subunit"/>
    <property type="evidence" value="ECO:0007669"/>
    <property type="project" value="InterPro"/>
</dbReference>
<dbReference type="GO" id="GO:0019843">
    <property type="term" value="F:rRNA binding"/>
    <property type="evidence" value="ECO:0007669"/>
    <property type="project" value="UniProtKB-KW"/>
</dbReference>
<dbReference type="GO" id="GO:0003735">
    <property type="term" value="F:structural constituent of ribosome"/>
    <property type="evidence" value="ECO:0007669"/>
    <property type="project" value="InterPro"/>
</dbReference>
<dbReference type="GO" id="GO:0042274">
    <property type="term" value="P:ribosomal small subunit biogenesis"/>
    <property type="evidence" value="ECO:0007669"/>
    <property type="project" value="TreeGrafter"/>
</dbReference>
<dbReference type="GO" id="GO:0006412">
    <property type="term" value="P:translation"/>
    <property type="evidence" value="ECO:0007669"/>
    <property type="project" value="InterPro"/>
</dbReference>
<dbReference type="CDD" id="cd00165">
    <property type="entry name" value="S4"/>
    <property type="match status" value="1"/>
</dbReference>
<dbReference type="FunFam" id="1.10.1050.10:FF:000002">
    <property type="entry name" value="30S ribosomal protein S4, chloroplastic"/>
    <property type="match status" value="1"/>
</dbReference>
<dbReference type="FunFam" id="3.10.290.10:FF:000081">
    <property type="entry name" value="30S ribosomal protein S4, chloroplastic"/>
    <property type="match status" value="1"/>
</dbReference>
<dbReference type="Gene3D" id="1.10.1050.10">
    <property type="entry name" value="Ribosomal Protein S4 Delta 41, Chain A, domain 1"/>
    <property type="match status" value="1"/>
</dbReference>
<dbReference type="Gene3D" id="3.10.290.10">
    <property type="entry name" value="RNA-binding S4 domain"/>
    <property type="match status" value="1"/>
</dbReference>
<dbReference type="HAMAP" id="MF_01306_B">
    <property type="entry name" value="Ribosomal_uS4_B"/>
    <property type="match status" value="1"/>
</dbReference>
<dbReference type="InterPro" id="IPR022801">
    <property type="entry name" value="Ribosomal_uS4"/>
</dbReference>
<dbReference type="InterPro" id="IPR005709">
    <property type="entry name" value="Ribosomal_uS4_bac-type"/>
</dbReference>
<dbReference type="InterPro" id="IPR018079">
    <property type="entry name" value="Ribosomal_uS4_CS"/>
</dbReference>
<dbReference type="InterPro" id="IPR001912">
    <property type="entry name" value="Ribosomal_uS4_N"/>
</dbReference>
<dbReference type="InterPro" id="IPR002942">
    <property type="entry name" value="S4_RNA-bd"/>
</dbReference>
<dbReference type="InterPro" id="IPR036986">
    <property type="entry name" value="S4_RNA-bd_sf"/>
</dbReference>
<dbReference type="NCBIfam" id="NF003717">
    <property type="entry name" value="PRK05327.1"/>
    <property type="match status" value="1"/>
</dbReference>
<dbReference type="NCBIfam" id="TIGR01017">
    <property type="entry name" value="rpsD_bact"/>
    <property type="match status" value="1"/>
</dbReference>
<dbReference type="PANTHER" id="PTHR11831">
    <property type="entry name" value="30S 40S RIBOSOMAL PROTEIN"/>
    <property type="match status" value="1"/>
</dbReference>
<dbReference type="PANTHER" id="PTHR11831:SF4">
    <property type="entry name" value="SMALL RIBOSOMAL SUBUNIT PROTEIN US4M"/>
    <property type="match status" value="1"/>
</dbReference>
<dbReference type="Pfam" id="PF00163">
    <property type="entry name" value="Ribosomal_S4"/>
    <property type="match status" value="1"/>
</dbReference>
<dbReference type="Pfam" id="PF01479">
    <property type="entry name" value="S4"/>
    <property type="match status" value="1"/>
</dbReference>
<dbReference type="SMART" id="SM01390">
    <property type="entry name" value="Ribosomal_S4"/>
    <property type="match status" value="1"/>
</dbReference>
<dbReference type="SMART" id="SM00363">
    <property type="entry name" value="S4"/>
    <property type="match status" value="1"/>
</dbReference>
<dbReference type="SUPFAM" id="SSF55174">
    <property type="entry name" value="Alpha-L RNA-binding motif"/>
    <property type="match status" value="1"/>
</dbReference>
<dbReference type="PROSITE" id="PS00632">
    <property type="entry name" value="RIBOSOMAL_S4"/>
    <property type="match status" value="1"/>
</dbReference>
<dbReference type="PROSITE" id="PS50889">
    <property type="entry name" value="S4"/>
    <property type="match status" value="1"/>
</dbReference>
<geneLocation type="chloroplast"/>
<name>RR4_SCHNE</name>
<gene>
    <name type="primary">rps4</name>
</gene>
<protein>
    <recommendedName>
        <fullName evidence="2">Small ribosomal subunit protein uS4c</fullName>
    </recommendedName>
    <alternativeName>
        <fullName>30S ribosomal protein S4, chloroplastic</fullName>
    </alternativeName>
</protein>
<evidence type="ECO:0000250" key="1"/>
<evidence type="ECO:0000305" key="2"/>
<comment type="function">
    <text evidence="1">One of the primary rRNA binding proteins, it binds directly to 16S rRNA where it nucleates assembly of the body of the 30S subunit.</text>
</comment>
<comment type="function">
    <text evidence="1">With S5 and S12 plays an important role in translational accuracy.</text>
</comment>
<comment type="subunit">
    <text evidence="1">Part of the 30S ribosomal subunit. Contacts protein S5. The interaction surface between S4 and S5 is involved in control of translational fidelity (By similarity).</text>
</comment>
<comment type="subcellular location">
    <subcellularLocation>
        <location>Plastid</location>
        <location>Chloroplast</location>
    </subcellularLocation>
</comment>
<comment type="similarity">
    <text evidence="2">Belongs to the universal ribosomal protein uS4 family.</text>
</comment>
<feature type="chain" id="PRO_0000132616" description="Small ribosomal subunit protein uS4c">
    <location>
        <begin position="1" status="less than"/>
        <end position="183" status="greater than"/>
    </location>
</feature>
<feature type="domain" description="S4 RNA-binding">
    <location>
        <begin position="82"/>
        <end position="143"/>
    </location>
</feature>
<feature type="non-terminal residue">
    <location>
        <position position="1"/>
    </location>
</feature>
<feature type="non-terminal residue">
    <location>
        <position position="183"/>
    </location>
</feature>
<proteinExistence type="inferred from homology"/>
<accession>O20255</accession>
<sequence>RFKKIRRLGALPGLTSKRPRSGSDLKNQLRSGKRSQYRIRLEEKQKLRFHYGLTERQLLKYVHIAGKAKGSTGQILLQLLEMRLDNILFRLGMASTIPGARQLVNHRHILVNGRIVDIPSYRCKPRDIITTKNKQRSKALIQNFIASSPQQEELPNHLTIDPFQYKGLVNQIIDSKWIGLKIN</sequence>
<reference key="1">
    <citation type="journal article" date="1997" name="Plant Syst. Evol.">
        <title>Phylogenetic analysis of Iridaceae with parsimony and distance methods using the plastid gene rps4.</title>
        <authorList>
            <person name="Souza-Chies T.T."/>
            <person name="Bittar G."/>
            <person name="Nadot S."/>
            <person name="Carter L."/>
            <person name="Besin E."/>
            <person name="Lejeune B.P."/>
        </authorList>
    </citation>
    <scope>NUCLEOTIDE SEQUENCE [GENOMIC DNA]</scope>
</reference>